<name>CINAL_SHESH</name>
<dbReference type="EMBL" id="CP000821">
    <property type="protein sequence ID" value="ABV38884.1"/>
    <property type="molecule type" value="Genomic_DNA"/>
</dbReference>
<dbReference type="RefSeq" id="WP_012144613.1">
    <property type="nucleotide sequence ID" value="NC_009831.1"/>
</dbReference>
<dbReference type="SMR" id="A8G1B1"/>
<dbReference type="STRING" id="425104.Ssed_4280"/>
<dbReference type="KEGG" id="sse:Ssed_4280"/>
<dbReference type="eggNOG" id="COG1058">
    <property type="taxonomic scope" value="Bacteria"/>
</dbReference>
<dbReference type="eggNOG" id="COG1546">
    <property type="taxonomic scope" value="Bacteria"/>
</dbReference>
<dbReference type="HOGENOM" id="CLU_030805_9_3_6"/>
<dbReference type="OrthoDB" id="9801454at2"/>
<dbReference type="Proteomes" id="UP000002015">
    <property type="component" value="Chromosome"/>
</dbReference>
<dbReference type="CDD" id="cd00885">
    <property type="entry name" value="cinA"/>
    <property type="match status" value="1"/>
</dbReference>
<dbReference type="Gene3D" id="3.90.950.20">
    <property type="entry name" value="CinA-like"/>
    <property type="match status" value="1"/>
</dbReference>
<dbReference type="Gene3D" id="3.40.980.10">
    <property type="entry name" value="MoaB/Mog-like domain"/>
    <property type="match status" value="1"/>
</dbReference>
<dbReference type="HAMAP" id="MF_00226_B">
    <property type="entry name" value="CinA_B"/>
    <property type="match status" value="1"/>
</dbReference>
<dbReference type="InterPro" id="IPR050101">
    <property type="entry name" value="CinA"/>
</dbReference>
<dbReference type="InterPro" id="IPR036653">
    <property type="entry name" value="CinA-like_C"/>
</dbReference>
<dbReference type="InterPro" id="IPR008136">
    <property type="entry name" value="CinA_C"/>
</dbReference>
<dbReference type="InterPro" id="IPR008135">
    <property type="entry name" value="Competence-induced_CinA"/>
</dbReference>
<dbReference type="InterPro" id="IPR036425">
    <property type="entry name" value="MoaB/Mog-like_dom_sf"/>
</dbReference>
<dbReference type="InterPro" id="IPR001453">
    <property type="entry name" value="MoaB/Mog_dom"/>
</dbReference>
<dbReference type="NCBIfam" id="TIGR00200">
    <property type="entry name" value="cinA_nterm"/>
    <property type="match status" value="1"/>
</dbReference>
<dbReference type="NCBIfam" id="TIGR00199">
    <property type="entry name" value="PncC_domain"/>
    <property type="match status" value="1"/>
</dbReference>
<dbReference type="PANTHER" id="PTHR13939">
    <property type="entry name" value="NICOTINAMIDE-NUCLEOTIDE AMIDOHYDROLASE PNCC"/>
    <property type="match status" value="1"/>
</dbReference>
<dbReference type="PANTHER" id="PTHR13939:SF0">
    <property type="entry name" value="NMN AMIDOHYDROLASE-LIKE PROTEIN YFAY"/>
    <property type="match status" value="1"/>
</dbReference>
<dbReference type="Pfam" id="PF02464">
    <property type="entry name" value="CinA"/>
    <property type="match status" value="1"/>
</dbReference>
<dbReference type="Pfam" id="PF00994">
    <property type="entry name" value="MoCF_biosynth"/>
    <property type="match status" value="1"/>
</dbReference>
<dbReference type="PIRSF" id="PIRSF006728">
    <property type="entry name" value="CinA"/>
    <property type="match status" value="1"/>
</dbReference>
<dbReference type="SMART" id="SM00852">
    <property type="entry name" value="MoCF_biosynth"/>
    <property type="match status" value="1"/>
</dbReference>
<dbReference type="SUPFAM" id="SSF142433">
    <property type="entry name" value="CinA-like"/>
    <property type="match status" value="1"/>
</dbReference>
<dbReference type="SUPFAM" id="SSF53218">
    <property type="entry name" value="Molybdenum cofactor biosynthesis proteins"/>
    <property type="match status" value="1"/>
</dbReference>
<protein>
    <recommendedName>
        <fullName evidence="1">CinA-like protein</fullName>
    </recommendedName>
</protein>
<gene>
    <name type="ordered locus">Ssed_4280</name>
</gene>
<comment type="similarity">
    <text evidence="1">Belongs to the CinA family.</text>
</comment>
<feature type="chain" id="PRO_1000078184" description="CinA-like protein">
    <location>
        <begin position="1"/>
        <end position="424"/>
    </location>
</feature>
<reference key="1">
    <citation type="submission" date="2007-08" db="EMBL/GenBank/DDBJ databases">
        <title>Complete sequence of Shewanella sediminis HAW-EB3.</title>
        <authorList>
            <consortium name="US DOE Joint Genome Institute"/>
            <person name="Copeland A."/>
            <person name="Lucas S."/>
            <person name="Lapidus A."/>
            <person name="Barry K."/>
            <person name="Glavina del Rio T."/>
            <person name="Dalin E."/>
            <person name="Tice H."/>
            <person name="Pitluck S."/>
            <person name="Chertkov O."/>
            <person name="Brettin T."/>
            <person name="Bruce D."/>
            <person name="Detter J.C."/>
            <person name="Han C."/>
            <person name="Schmutz J."/>
            <person name="Larimer F."/>
            <person name="Land M."/>
            <person name="Hauser L."/>
            <person name="Kyrpides N."/>
            <person name="Kim E."/>
            <person name="Zhao J.-S."/>
            <person name="Richardson P."/>
        </authorList>
    </citation>
    <scope>NUCLEOTIDE SEQUENCE [LARGE SCALE GENOMIC DNA]</scope>
    <source>
        <strain>HAW-EB3</strain>
    </source>
</reference>
<keyword id="KW-1185">Reference proteome</keyword>
<sequence length="424" mass="45634">MKLEMICTGEEVLAGQIVDTNAAWFANTLMGKGIECQRRITVGDRLEDLVAVFKERSTEADIIMVNGGLGPTSDDLSTEAMALAMGVPLVESKEWRTKLEAWFTRNNRVMAASNLKQALLPEGAVMIDNPVGTACGFAVKLNRAWLFFTPGVPFEFKRMVKEQFIPFVEKQFALSESVSVKKLLTLGRGESSLADELDVIQLPEGVTLGYRSYMPYIEIKLFARGQSAIDSLPDIEAQVKKVLGNGIVAENITTLDQEIHERLINSGLSLSVAESCTGGMITSGLVAFAGSSSYLHQGLVTYSNEAKVKVLGVNSQTLDDYGAVSIATVEEMAKGARGILGSDYALATSGIAGPEGGTDEKPVGTVAIALATKSGIYSQMVKLPGRSRALVRALSTAVAYDMLRRELLGEAVIVDYSSFSRFCK</sequence>
<organism>
    <name type="scientific">Shewanella sediminis (strain HAW-EB3)</name>
    <dbReference type="NCBI Taxonomy" id="425104"/>
    <lineage>
        <taxon>Bacteria</taxon>
        <taxon>Pseudomonadati</taxon>
        <taxon>Pseudomonadota</taxon>
        <taxon>Gammaproteobacteria</taxon>
        <taxon>Alteromonadales</taxon>
        <taxon>Shewanellaceae</taxon>
        <taxon>Shewanella</taxon>
    </lineage>
</organism>
<proteinExistence type="inferred from homology"/>
<accession>A8G1B1</accession>
<evidence type="ECO:0000255" key="1">
    <source>
        <dbReference type="HAMAP-Rule" id="MF_00226"/>
    </source>
</evidence>